<evidence type="ECO:0000255" key="1">
    <source>
        <dbReference type="HAMAP-Rule" id="MF_00270"/>
    </source>
</evidence>
<evidence type="ECO:0000305" key="2"/>
<keyword id="KW-0150">Chloroplast</keyword>
<keyword id="KW-0934">Plastid</keyword>
<keyword id="KW-0687">Ribonucleoprotein</keyword>
<keyword id="KW-0689">Ribosomal protein</keyword>
<keyword id="KW-0694">RNA-binding</keyword>
<keyword id="KW-0699">rRNA-binding</keyword>
<geneLocation type="chloroplast"/>
<sequence>MLAQKQKLAPIGINQKIDYKDIDLLKLFITEQGKILPRRATGVTVQQQRQLAKAIKRARILSLLPFVASNEL</sequence>
<reference key="1">
    <citation type="journal article" date="2007" name="Mol. Genet. Genomics">
        <title>Chloroplast genomes of the diatoms Phaeodactylum tricornutum and Thalassiosira pseudonana: comparison with other plastid genomes of the red lineage.</title>
        <authorList>
            <person name="Oudot-Le Secq M.-P."/>
            <person name="Grimwood J."/>
            <person name="Shapiro H."/>
            <person name="Armbrust E.V."/>
            <person name="Bowler C."/>
            <person name="Green B.R."/>
        </authorList>
    </citation>
    <scope>NUCLEOTIDE SEQUENCE [LARGE SCALE GENOMIC DNA]</scope>
    <source>
        <strain>CCMP1335 / NEPCC58 / CCAP 1085/12</strain>
    </source>
</reference>
<comment type="subunit">
    <text>Part of the 30S ribosomal subunit.</text>
</comment>
<comment type="subcellular location">
    <subcellularLocation>
        <location>Plastid</location>
        <location>Chloroplast</location>
    </subcellularLocation>
</comment>
<comment type="similarity">
    <text evidence="1">Belongs to the bacterial ribosomal protein bS18 family.</text>
</comment>
<dbReference type="EMBL" id="EF067921">
    <property type="protein sequence ID" value="ABK20749.1"/>
    <property type="molecule type" value="Genomic_DNA"/>
</dbReference>
<dbReference type="RefSeq" id="YP_874526.1">
    <property type="nucleotide sequence ID" value="NC_008589.1"/>
</dbReference>
<dbReference type="SMR" id="A0T0R4"/>
<dbReference type="STRING" id="35128.A0T0R4"/>
<dbReference type="PaxDb" id="35128-Thapsdraft1251"/>
<dbReference type="GeneID" id="4524732"/>
<dbReference type="eggNOG" id="KOG3162">
    <property type="taxonomic scope" value="Eukaryota"/>
</dbReference>
<dbReference type="InParanoid" id="A0T0R4"/>
<dbReference type="OMA" id="NMKKARM"/>
<dbReference type="GO" id="GO:0009507">
    <property type="term" value="C:chloroplast"/>
    <property type="evidence" value="ECO:0007669"/>
    <property type="project" value="UniProtKB-SubCell"/>
</dbReference>
<dbReference type="GO" id="GO:0005763">
    <property type="term" value="C:mitochondrial small ribosomal subunit"/>
    <property type="evidence" value="ECO:0000318"/>
    <property type="project" value="GO_Central"/>
</dbReference>
<dbReference type="GO" id="GO:0070181">
    <property type="term" value="F:small ribosomal subunit rRNA binding"/>
    <property type="evidence" value="ECO:0000318"/>
    <property type="project" value="GO_Central"/>
</dbReference>
<dbReference type="GO" id="GO:0003735">
    <property type="term" value="F:structural constituent of ribosome"/>
    <property type="evidence" value="ECO:0000318"/>
    <property type="project" value="GO_Central"/>
</dbReference>
<dbReference type="GO" id="GO:0006412">
    <property type="term" value="P:translation"/>
    <property type="evidence" value="ECO:0000318"/>
    <property type="project" value="GO_Central"/>
</dbReference>
<dbReference type="FunFam" id="4.10.640.10:FF:000002">
    <property type="entry name" value="30S ribosomal protein S18, chloroplastic"/>
    <property type="match status" value="1"/>
</dbReference>
<dbReference type="Gene3D" id="4.10.640.10">
    <property type="entry name" value="Ribosomal protein S18"/>
    <property type="match status" value="1"/>
</dbReference>
<dbReference type="HAMAP" id="MF_00270">
    <property type="entry name" value="Ribosomal_bS18"/>
    <property type="match status" value="1"/>
</dbReference>
<dbReference type="InterPro" id="IPR001648">
    <property type="entry name" value="Ribosomal_bS18"/>
</dbReference>
<dbReference type="InterPro" id="IPR018275">
    <property type="entry name" value="Ribosomal_bS18_CS"/>
</dbReference>
<dbReference type="InterPro" id="IPR036870">
    <property type="entry name" value="Ribosomal_bS18_sf"/>
</dbReference>
<dbReference type="NCBIfam" id="TIGR00165">
    <property type="entry name" value="S18"/>
    <property type="match status" value="1"/>
</dbReference>
<dbReference type="PANTHER" id="PTHR13479">
    <property type="entry name" value="30S RIBOSOMAL PROTEIN S18"/>
    <property type="match status" value="1"/>
</dbReference>
<dbReference type="PANTHER" id="PTHR13479:SF40">
    <property type="entry name" value="SMALL RIBOSOMAL SUBUNIT PROTEIN BS18M"/>
    <property type="match status" value="1"/>
</dbReference>
<dbReference type="Pfam" id="PF01084">
    <property type="entry name" value="Ribosomal_S18"/>
    <property type="match status" value="1"/>
</dbReference>
<dbReference type="PRINTS" id="PR00974">
    <property type="entry name" value="RIBOSOMALS18"/>
</dbReference>
<dbReference type="SUPFAM" id="SSF46911">
    <property type="entry name" value="Ribosomal protein S18"/>
    <property type="match status" value="1"/>
</dbReference>
<dbReference type="PROSITE" id="PS00057">
    <property type="entry name" value="RIBOSOMAL_S18"/>
    <property type="match status" value="1"/>
</dbReference>
<accession>A0T0R4</accession>
<name>RR18_THAPS</name>
<gene>
    <name evidence="1" type="primary">rps18</name>
</gene>
<proteinExistence type="inferred from homology"/>
<organism>
    <name type="scientific">Thalassiosira pseudonana</name>
    <name type="common">Marine diatom</name>
    <name type="synonym">Cyclotella nana</name>
    <dbReference type="NCBI Taxonomy" id="35128"/>
    <lineage>
        <taxon>Eukaryota</taxon>
        <taxon>Sar</taxon>
        <taxon>Stramenopiles</taxon>
        <taxon>Ochrophyta</taxon>
        <taxon>Bacillariophyta</taxon>
        <taxon>Coscinodiscophyceae</taxon>
        <taxon>Thalassiosirophycidae</taxon>
        <taxon>Thalassiosirales</taxon>
        <taxon>Thalassiosiraceae</taxon>
        <taxon>Thalassiosira</taxon>
    </lineage>
</organism>
<feature type="chain" id="PRO_0000276898" description="Small ribosomal subunit protein bS18c">
    <location>
        <begin position="1"/>
        <end position="72"/>
    </location>
</feature>
<protein>
    <recommendedName>
        <fullName evidence="1">Small ribosomal subunit protein bS18c</fullName>
    </recommendedName>
    <alternativeName>
        <fullName evidence="2">30S ribosomal protein S18, chloroplastic</fullName>
    </alternativeName>
</protein>